<comment type="similarity">
    <text evidence="1">Belongs to the eukaryotic ribosomal protein eS1 family.</text>
</comment>
<evidence type="ECO:0000255" key="1">
    <source>
        <dbReference type="HAMAP-Rule" id="MF_00359"/>
    </source>
</evidence>
<evidence type="ECO:0000305" key="2"/>
<accession>Q4JB17</accession>
<reference key="1">
    <citation type="journal article" date="2005" name="J. Bacteriol.">
        <title>The genome of Sulfolobus acidocaldarius, a model organism of the Crenarchaeota.</title>
        <authorList>
            <person name="Chen L."/>
            <person name="Bruegger K."/>
            <person name="Skovgaard M."/>
            <person name="Redder P."/>
            <person name="She Q."/>
            <person name="Torarinsson E."/>
            <person name="Greve B."/>
            <person name="Awayez M."/>
            <person name="Zibat A."/>
            <person name="Klenk H.-P."/>
            <person name="Garrett R.A."/>
        </authorList>
    </citation>
    <scope>NUCLEOTIDE SEQUENCE [LARGE SCALE GENOMIC DNA]</scope>
    <source>
        <strain>ATCC 33909 / DSM 639 / JCM 8929 / NBRC 15157 / NCIMB 11770</strain>
    </source>
</reference>
<organism>
    <name type="scientific">Sulfolobus acidocaldarius (strain ATCC 33909 / DSM 639 / JCM 8929 / NBRC 15157 / NCIMB 11770)</name>
    <dbReference type="NCBI Taxonomy" id="330779"/>
    <lineage>
        <taxon>Archaea</taxon>
        <taxon>Thermoproteota</taxon>
        <taxon>Thermoprotei</taxon>
        <taxon>Sulfolobales</taxon>
        <taxon>Sulfolobaceae</taxon>
        <taxon>Sulfolobus</taxon>
    </lineage>
</organism>
<feature type="chain" id="PRO_0000153560" description="Small ribosomal subunit protein eS1">
    <location>
        <begin position="1"/>
        <end position="197"/>
    </location>
</feature>
<dbReference type="EMBL" id="CP000077">
    <property type="protein sequence ID" value="AAY80012.1"/>
    <property type="molecule type" value="Genomic_DNA"/>
</dbReference>
<dbReference type="RefSeq" id="WP_011277514.1">
    <property type="nucleotide sequence ID" value="NC_007181.1"/>
</dbReference>
<dbReference type="PDB" id="8HKX">
    <property type="method" value="EM"/>
    <property type="resolution" value="3.14 A"/>
    <property type="chains" value="S3AE=9-197"/>
</dbReference>
<dbReference type="PDB" id="8HKY">
    <property type="method" value="EM"/>
    <property type="resolution" value="4.45 A"/>
    <property type="chains" value="S3AE=9-197"/>
</dbReference>
<dbReference type="PDB" id="8HKZ">
    <property type="method" value="EM"/>
    <property type="resolution" value="4.78 A"/>
    <property type="chains" value="S3AE=9-197"/>
</dbReference>
<dbReference type="PDB" id="8HL1">
    <property type="method" value="EM"/>
    <property type="resolution" value="3.93 A"/>
    <property type="chains" value="S3AE=9-197"/>
</dbReference>
<dbReference type="PDB" id="8HL2">
    <property type="method" value="EM"/>
    <property type="resolution" value="4.10 A"/>
    <property type="chains" value="S3AE=9-197"/>
</dbReference>
<dbReference type="PDB" id="8HL3">
    <property type="method" value="EM"/>
    <property type="resolution" value="4.80 A"/>
    <property type="chains" value="S3AE=9-197"/>
</dbReference>
<dbReference type="PDB" id="8HL4">
    <property type="method" value="EM"/>
    <property type="resolution" value="4.62 A"/>
    <property type="chains" value="S3AE=9-197"/>
</dbReference>
<dbReference type="PDB" id="8HL5">
    <property type="method" value="EM"/>
    <property type="resolution" value="5.72 A"/>
    <property type="chains" value="S3AE=9-197"/>
</dbReference>
<dbReference type="PDB" id="8WKP">
    <property type="method" value="EM"/>
    <property type="resolution" value="4.62 A"/>
    <property type="chains" value="S3AE=9-197"/>
</dbReference>
<dbReference type="PDB" id="8WQ2">
    <property type="method" value="EM"/>
    <property type="resolution" value="4.10 A"/>
    <property type="chains" value="S3AE=9-197"/>
</dbReference>
<dbReference type="PDB" id="8WQ4">
    <property type="method" value="EM"/>
    <property type="resolution" value="4.53 A"/>
    <property type="chains" value="S3AE=9-197"/>
</dbReference>
<dbReference type="PDBsum" id="8HKX"/>
<dbReference type="PDBsum" id="8HKY"/>
<dbReference type="PDBsum" id="8HKZ"/>
<dbReference type="PDBsum" id="8HL1"/>
<dbReference type="PDBsum" id="8HL2"/>
<dbReference type="PDBsum" id="8HL3"/>
<dbReference type="PDBsum" id="8HL4"/>
<dbReference type="PDBsum" id="8HL5"/>
<dbReference type="PDBsum" id="8WKP"/>
<dbReference type="PDBsum" id="8WQ2"/>
<dbReference type="PDBsum" id="8WQ4"/>
<dbReference type="EMDB" id="EMD-34862"/>
<dbReference type="EMDB" id="EMD-34863"/>
<dbReference type="EMDB" id="EMD-34864"/>
<dbReference type="EMDB" id="EMD-34866"/>
<dbReference type="EMDB" id="EMD-34867"/>
<dbReference type="EMDB" id="EMD-34868"/>
<dbReference type="EMDB" id="EMD-34869"/>
<dbReference type="EMDB" id="EMD-34870"/>
<dbReference type="EMDB" id="EMD-37604"/>
<dbReference type="EMDB" id="EMD-37733"/>
<dbReference type="EMDB" id="EMD-37734"/>
<dbReference type="SMR" id="Q4JB17"/>
<dbReference type="STRING" id="330779.Saci_0620"/>
<dbReference type="GeneID" id="14551141"/>
<dbReference type="KEGG" id="sai:Saci_0620"/>
<dbReference type="PATRIC" id="fig|330779.12.peg.599"/>
<dbReference type="eggNOG" id="arCOG04186">
    <property type="taxonomic scope" value="Archaea"/>
</dbReference>
<dbReference type="HOGENOM" id="CLU_062507_1_0_2"/>
<dbReference type="Proteomes" id="UP000001018">
    <property type="component" value="Chromosome"/>
</dbReference>
<dbReference type="GO" id="GO:1990904">
    <property type="term" value="C:ribonucleoprotein complex"/>
    <property type="evidence" value="ECO:0007669"/>
    <property type="project" value="UniProtKB-KW"/>
</dbReference>
<dbReference type="GO" id="GO:0005840">
    <property type="term" value="C:ribosome"/>
    <property type="evidence" value="ECO:0007669"/>
    <property type="project" value="UniProtKB-KW"/>
</dbReference>
<dbReference type="GO" id="GO:0003735">
    <property type="term" value="F:structural constituent of ribosome"/>
    <property type="evidence" value="ECO:0007669"/>
    <property type="project" value="InterPro"/>
</dbReference>
<dbReference type="GO" id="GO:0006412">
    <property type="term" value="P:translation"/>
    <property type="evidence" value="ECO:0007669"/>
    <property type="project" value="UniProtKB-UniRule"/>
</dbReference>
<dbReference type="HAMAP" id="MF_00359">
    <property type="entry name" value="Ribosomal_eS1"/>
    <property type="match status" value="1"/>
</dbReference>
<dbReference type="InterPro" id="IPR001593">
    <property type="entry name" value="Ribosomal_eS1"/>
</dbReference>
<dbReference type="InterPro" id="IPR030838">
    <property type="entry name" value="Ribosomal_eS1_arc"/>
</dbReference>
<dbReference type="NCBIfam" id="NF003142">
    <property type="entry name" value="PRK04057.1"/>
    <property type="match status" value="1"/>
</dbReference>
<dbReference type="PANTHER" id="PTHR11830">
    <property type="entry name" value="40S RIBOSOMAL PROTEIN S3A"/>
    <property type="match status" value="1"/>
</dbReference>
<dbReference type="Pfam" id="PF01015">
    <property type="entry name" value="Ribosomal_S3Ae"/>
    <property type="match status" value="1"/>
</dbReference>
<dbReference type="SMART" id="SM01397">
    <property type="entry name" value="Ribosomal_S3Ae"/>
    <property type="match status" value="1"/>
</dbReference>
<name>RS3A_SULAC</name>
<sequence length="197" mass="22633">MSSKSSSTIRDKWKLKKWYVITAPKVFGEALLGSTPAYDINKALSRKIEVTLYDLTGDYNLVYIHLYFKILGNISGDKLSTIFYGHELSRDYIRSLVRRKSSKINAVVDVTTKDGYMLRVKGLVLTTYRAHISQKTAIRKVISDITRKKAEESDFDQFVQDVIFGKLSNDIFQEAKKIYPLRKVEIEKTKLLKAPKV</sequence>
<keyword id="KW-0002">3D-structure</keyword>
<keyword id="KW-1185">Reference proteome</keyword>
<keyword id="KW-0687">Ribonucleoprotein</keyword>
<keyword id="KW-0689">Ribosomal protein</keyword>
<proteinExistence type="evidence at protein level"/>
<gene>
    <name evidence="1" type="primary">rps3ae</name>
    <name type="ordered locus">Saci_0620</name>
</gene>
<protein>
    <recommendedName>
        <fullName evidence="1">Small ribosomal subunit protein eS1</fullName>
    </recommendedName>
    <alternativeName>
        <fullName evidence="2">30S ribosomal protein S3Ae</fullName>
    </alternativeName>
    <alternativeName>
        <fullName evidence="1">Ribosomal protein S1e</fullName>
    </alternativeName>
</protein>